<gene>
    <name evidence="1" type="primary">gatC</name>
    <name type="ordered locus">Bcenmc03_3125</name>
</gene>
<feature type="chain" id="PRO_1000095265" description="Aspartyl/glutamyl-tRNA(Asn/Gln) amidotransferase subunit C">
    <location>
        <begin position="1"/>
        <end position="99"/>
    </location>
</feature>
<organism>
    <name type="scientific">Burkholderia orbicola (strain MC0-3)</name>
    <dbReference type="NCBI Taxonomy" id="406425"/>
    <lineage>
        <taxon>Bacteria</taxon>
        <taxon>Pseudomonadati</taxon>
        <taxon>Pseudomonadota</taxon>
        <taxon>Betaproteobacteria</taxon>
        <taxon>Burkholderiales</taxon>
        <taxon>Burkholderiaceae</taxon>
        <taxon>Burkholderia</taxon>
        <taxon>Burkholderia cepacia complex</taxon>
        <taxon>Burkholderia orbicola</taxon>
    </lineage>
</organism>
<name>GATC_BURO0</name>
<sequence length="99" mass="10956">MALTLTDVKRIAHLARLEMADADAEHMLGQLNEFFGLVEQMQAVDTAGIAPLAHPIEQIQEVAQRLRDDAVTEVVNRDDNQRPAPAVQDGLYLVPKVIE</sequence>
<proteinExistence type="inferred from homology"/>
<reference key="1">
    <citation type="submission" date="2008-02" db="EMBL/GenBank/DDBJ databases">
        <title>Complete sequence of chromosome 1 of Burkholderia cenocepacia MC0-3.</title>
        <authorList>
            <person name="Copeland A."/>
            <person name="Lucas S."/>
            <person name="Lapidus A."/>
            <person name="Barry K."/>
            <person name="Bruce D."/>
            <person name="Goodwin L."/>
            <person name="Glavina del Rio T."/>
            <person name="Dalin E."/>
            <person name="Tice H."/>
            <person name="Pitluck S."/>
            <person name="Chain P."/>
            <person name="Malfatti S."/>
            <person name="Shin M."/>
            <person name="Vergez L."/>
            <person name="Schmutz J."/>
            <person name="Larimer F."/>
            <person name="Land M."/>
            <person name="Hauser L."/>
            <person name="Kyrpides N."/>
            <person name="Mikhailova N."/>
            <person name="Tiedje J."/>
            <person name="Richardson P."/>
        </authorList>
    </citation>
    <scope>NUCLEOTIDE SEQUENCE [LARGE SCALE GENOMIC DNA]</scope>
    <source>
        <strain>MC0-3</strain>
    </source>
</reference>
<evidence type="ECO:0000255" key="1">
    <source>
        <dbReference type="HAMAP-Rule" id="MF_00122"/>
    </source>
</evidence>
<protein>
    <recommendedName>
        <fullName evidence="1">Aspartyl/glutamyl-tRNA(Asn/Gln) amidotransferase subunit C</fullName>
        <shortName evidence="1">Asp/Glu-ADT subunit C</shortName>
        <ecNumber evidence="1">6.3.5.-</ecNumber>
    </recommendedName>
</protein>
<keyword id="KW-0067">ATP-binding</keyword>
<keyword id="KW-0436">Ligase</keyword>
<keyword id="KW-0547">Nucleotide-binding</keyword>
<keyword id="KW-0648">Protein biosynthesis</keyword>
<accession>B1K0H8</accession>
<comment type="function">
    <text evidence="1">Allows the formation of correctly charged Asn-tRNA(Asn) or Gln-tRNA(Gln) through the transamidation of misacylated Asp-tRNA(Asn) or Glu-tRNA(Gln) in organisms which lack either or both of asparaginyl-tRNA or glutaminyl-tRNA synthetases. The reaction takes place in the presence of glutamine and ATP through an activated phospho-Asp-tRNA(Asn) or phospho-Glu-tRNA(Gln).</text>
</comment>
<comment type="catalytic activity">
    <reaction evidence="1">
        <text>L-glutamyl-tRNA(Gln) + L-glutamine + ATP + H2O = L-glutaminyl-tRNA(Gln) + L-glutamate + ADP + phosphate + H(+)</text>
        <dbReference type="Rhea" id="RHEA:17521"/>
        <dbReference type="Rhea" id="RHEA-COMP:9681"/>
        <dbReference type="Rhea" id="RHEA-COMP:9684"/>
        <dbReference type="ChEBI" id="CHEBI:15377"/>
        <dbReference type="ChEBI" id="CHEBI:15378"/>
        <dbReference type="ChEBI" id="CHEBI:29985"/>
        <dbReference type="ChEBI" id="CHEBI:30616"/>
        <dbReference type="ChEBI" id="CHEBI:43474"/>
        <dbReference type="ChEBI" id="CHEBI:58359"/>
        <dbReference type="ChEBI" id="CHEBI:78520"/>
        <dbReference type="ChEBI" id="CHEBI:78521"/>
        <dbReference type="ChEBI" id="CHEBI:456216"/>
    </reaction>
</comment>
<comment type="catalytic activity">
    <reaction evidence="1">
        <text>L-aspartyl-tRNA(Asn) + L-glutamine + ATP + H2O = L-asparaginyl-tRNA(Asn) + L-glutamate + ADP + phosphate + 2 H(+)</text>
        <dbReference type="Rhea" id="RHEA:14513"/>
        <dbReference type="Rhea" id="RHEA-COMP:9674"/>
        <dbReference type="Rhea" id="RHEA-COMP:9677"/>
        <dbReference type="ChEBI" id="CHEBI:15377"/>
        <dbReference type="ChEBI" id="CHEBI:15378"/>
        <dbReference type="ChEBI" id="CHEBI:29985"/>
        <dbReference type="ChEBI" id="CHEBI:30616"/>
        <dbReference type="ChEBI" id="CHEBI:43474"/>
        <dbReference type="ChEBI" id="CHEBI:58359"/>
        <dbReference type="ChEBI" id="CHEBI:78515"/>
        <dbReference type="ChEBI" id="CHEBI:78516"/>
        <dbReference type="ChEBI" id="CHEBI:456216"/>
    </reaction>
</comment>
<comment type="subunit">
    <text evidence="1">Heterotrimer of A, B and C subunits.</text>
</comment>
<comment type="similarity">
    <text evidence="1">Belongs to the GatC family.</text>
</comment>
<dbReference type="EC" id="6.3.5.-" evidence="1"/>
<dbReference type="EMBL" id="CP000958">
    <property type="protein sequence ID" value="ACA92283.1"/>
    <property type="molecule type" value="Genomic_DNA"/>
</dbReference>
<dbReference type="RefSeq" id="WP_006477478.1">
    <property type="nucleotide sequence ID" value="NC_010508.1"/>
</dbReference>
<dbReference type="SMR" id="B1K0H8"/>
<dbReference type="GeneID" id="93084644"/>
<dbReference type="KEGG" id="bcm:Bcenmc03_3125"/>
<dbReference type="HOGENOM" id="CLU_105899_2_2_4"/>
<dbReference type="Proteomes" id="UP000002169">
    <property type="component" value="Chromosome 1"/>
</dbReference>
<dbReference type="GO" id="GO:0050566">
    <property type="term" value="F:asparaginyl-tRNA synthase (glutamine-hydrolyzing) activity"/>
    <property type="evidence" value="ECO:0007669"/>
    <property type="project" value="RHEA"/>
</dbReference>
<dbReference type="GO" id="GO:0005524">
    <property type="term" value="F:ATP binding"/>
    <property type="evidence" value="ECO:0007669"/>
    <property type="project" value="UniProtKB-KW"/>
</dbReference>
<dbReference type="GO" id="GO:0050567">
    <property type="term" value="F:glutaminyl-tRNA synthase (glutamine-hydrolyzing) activity"/>
    <property type="evidence" value="ECO:0007669"/>
    <property type="project" value="UniProtKB-UniRule"/>
</dbReference>
<dbReference type="GO" id="GO:0070681">
    <property type="term" value="P:glutaminyl-tRNAGln biosynthesis via transamidation"/>
    <property type="evidence" value="ECO:0007669"/>
    <property type="project" value="TreeGrafter"/>
</dbReference>
<dbReference type="GO" id="GO:0006450">
    <property type="term" value="P:regulation of translational fidelity"/>
    <property type="evidence" value="ECO:0007669"/>
    <property type="project" value="InterPro"/>
</dbReference>
<dbReference type="GO" id="GO:0006412">
    <property type="term" value="P:translation"/>
    <property type="evidence" value="ECO:0007669"/>
    <property type="project" value="UniProtKB-UniRule"/>
</dbReference>
<dbReference type="Gene3D" id="1.10.20.60">
    <property type="entry name" value="Glu-tRNAGln amidotransferase C subunit, N-terminal domain"/>
    <property type="match status" value="1"/>
</dbReference>
<dbReference type="HAMAP" id="MF_00122">
    <property type="entry name" value="GatC"/>
    <property type="match status" value="1"/>
</dbReference>
<dbReference type="InterPro" id="IPR036113">
    <property type="entry name" value="Asp/Glu-ADT_sf_sub_c"/>
</dbReference>
<dbReference type="InterPro" id="IPR003837">
    <property type="entry name" value="GatC"/>
</dbReference>
<dbReference type="NCBIfam" id="TIGR00135">
    <property type="entry name" value="gatC"/>
    <property type="match status" value="1"/>
</dbReference>
<dbReference type="PANTHER" id="PTHR15004">
    <property type="entry name" value="GLUTAMYL-TRNA(GLN) AMIDOTRANSFERASE SUBUNIT C, MITOCHONDRIAL"/>
    <property type="match status" value="1"/>
</dbReference>
<dbReference type="PANTHER" id="PTHR15004:SF0">
    <property type="entry name" value="GLUTAMYL-TRNA(GLN) AMIDOTRANSFERASE SUBUNIT C, MITOCHONDRIAL"/>
    <property type="match status" value="1"/>
</dbReference>
<dbReference type="Pfam" id="PF02686">
    <property type="entry name" value="GatC"/>
    <property type="match status" value="1"/>
</dbReference>
<dbReference type="SUPFAM" id="SSF141000">
    <property type="entry name" value="Glu-tRNAGln amidotransferase C subunit"/>
    <property type="match status" value="1"/>
</dbReference>